<accession>P0DKU6</accession>
<sequence length="127" mass="14667">MSLLRNRLQDLPALCLCVLVLACIGACQSEAHEETPSPPPKLKMSHWSLVTGRMKELLEPVVNRTRDRWQWFWSPSTFRGFMQTYYDDHLRDLGPRTKAWLLKSKDSLLNKTHSLCPRIVCGDKDQG</sequence>
<reference key="1">
    <citation type="submission" date="2006-07" db="EMBL/GenBank/DDBJ databases">
        <authorList>
            <person name="Cheng J.-F."/>
            <person name="Hamilton M."/>
            <person name="Peng Y."/>
            <person name="Hosseini R."/>
            <person name="Peng Z."/>
            <person name="Malinov I."/>
            <person name="Rubin E.M."/>
        </authorList>
    </citation>
    <scope>NUCLEOTIDE SEQUENCE [LARGE SCALE GENOMIC DNA]</scope>
</reference>
<reference key="2">
    <citation type="unpublished observations" date="2012-11">
        <authorList>
            <person name="Puppione D.L."/>
        </authorList>
    </citation>
    <scope>IDENTIFICATION</scope>
</reference>
<name>APOC4_COLGU</name>
<proteinExistence type="inferred from homology"/>
<gene>
    <name type="primary">APOC4</name>
</gene>
<protein>
    <recommendedName>
        <fullName>Apolipoprotein C-IV</fullName>
        <shortName>Apo-CIV</shortName>
        <shortName>ApoC-IV</shortName>
    </recommendedName>
    <alternativeName>
        <fullName>Apolipoprotein C4</fullName>
    </alternativeName>
</protein>
<feature type="signal peptide" evidence="2">
    <location>
        <begin position="1"/>
        <end position="27"/>
    </location>
</feature>
<feature type="chain" id="PRO_0000420898" description="Apolipoprotein C-IV">
    <location>
        <begin position="28"/>
        <end position="127"/>
    </location>
</feature>
<feature type="glycosylation site" description="N-linked (GlcNAc...) asparagine" evidence="3">
    <location>
        <position position="63"/>
    </location>
</feature>
<organism>
    <name type="scientific">Colobus guereza</name>
    <name type="common">Mantled guereza</name>
    <name type="synonym">Eastern black-and-white colobus monkey</name>
    <dbReference type="NCBI Taxonomy" id="33548"/>
    <lineage>
        <taxon>Eukaryota</taxon>
        <taxon>Metazoa</taxon>
        <taxon>Chordata</taxon>
        <taxon>Craniata</taxon>
        <taxon>Vertebrata</taxon>
        <taxon>Euteleostomi</taxon>
        <taxon>Mammalia</taxon>
        <taxon>Eutheria</taxon>
        <taxon>Euarchontoglires</taxon>
        <taxon>Primates</taxon>
        <taxon>Haplorrhini</taxon>
        <taxon>Catarrhini</taxon>
        <taxon>Cercopithecidae</taxon>
        <taxon>Colobinae</taxon>
        <taxon>Colobus</taxon>
    </lineage>
</organism>
<dbReference type="EMBL" id="AC148222">
    <property type="status" value="NOT_ANNOTATED_CDS"/>
    <property type="molecule type" value="Genomic_DNA"/>
</dbReference>
<dbReference type="GlyCosmos" id="P0DKU6">
    <property type="glycosylation" value="1 site, No reported glycans"/>
</dbReference>
<dbReference type="GO" id="GO:0034364">
    <property type="term" value="C:high-density lipoprotein particle"/>
    <property type="evidence" value="ECO:0007669"/>
    <property type="project" value="TreeGrafter"/>
</dbReference>
<dbReference type="GO" id="GO:0034361">
    <property type="term" value="C:very-low-density lipoprotein particle"/>
    <property type="evidence" value="ECO:0007669"/>
    <property type="project" value="TreeGrafter"/>
</dbReference>
<dbReference type="GO" id="GO:0006869">
    <property type="term" value="P:lipid transport"/>
    <property type="evidence" value="ECO:0007669"/>
    <property type="project" value="UniProtKB-KW"/>
</dbReference>
<dbReference type="GO" id="GO:0010890">
    <property type="term" value="P:positive regulation of triglyceride storage"/>
    <property type="evidence" value="ECO:0007669"/>
    <property type="project" value="TreeGrafter"/>
</dbReference>
<dbReference type="GO" id="GO:0070328">
    <property type="term" value="P:triglyceride homeostasis"/>
    <property type="evidence" value="ECO:0007669"/>
    <property type="project" value="TreeGrafter"/>
</dbReference>
<dbReference type="InterPro" id="IPR028120">
    <property type="entry name" value="APOC4"/>
</dbReference>
<dbReference type="PANTHER" id="PTHR32288">
    <property type="entry name" value="APOLIPOPROTEIN C-IV"/>
    <property type="match status" value="1"/>
</dbReference>
<dbReference type="PANTHER" id="PTHR32288:SF0">
    <property type="entry name" value="APOLIPOPROTEIN C-IV"/>
    <property type="match status" value="1"/>
</dbReference>
<dbReference type="Pfam" id="PF15119">
    <property type="entry name" value="APOC4"/>
    <property type="match status" value="1"/>
</dbReference>
<evidence type="ECO:0000250" key="1"/>
<evidence type="ECO:0000250" key="2">
    <source>
        <dbReference type="UniProtKB" id="P55057"/>
    </source>
</evidence>
<evidence type="ECO:0000255" key="3"/>
<evidence type="ECO:0000305" key="4"/>
<comment type="function">
    <text evidence="1">May participate in lipoprotein metabolism.</text>
</comment>
<comment type="subcellular location">
    <subcellularLocation>
        <location evidence="1">Secreted</location>
    </subcellularLocation>
</comment>
<comment type="similarity">
    <text evidence="4">Belongs to the apolipoprotein C4 family.</text>
</comment>
<keyword id="KW-0325">Glycoprotein</keyword>
<keyword id="KW-0445">Lipid transport</keyword>
<keyword id="KW-0964">Secreted</keyword>
<keyword id="KW-0732">Signal</keyword>
<keyword id="KW-0813">Transport</keyword>